<reference key="1">
    <citation type="journal article" date="1998" name="DNA Res.">
        <title>Structural analysis of Arabidopsis thaliana chromosome 5. VI. Sequence features of the regions of 1,367,185 bp covered by 19 physically assigned P1 and TAC clones.</title>
        <authorList>
            <person name="Kotani H."/>
            <person name="Nakamura Y."/>
            <person name="Sato S."/>
            <person name="Asamizu E."/>
            <person name="Kaneko T."/>
            <person name="Miyajima N."/>
            <person name="Tabata S."/>
        </authorList>
    </citation>
    <scope>NUCLEOTIDE SEQUENCE [LARGE SCALE GENOMIC DNA]</scope>
    <source>
        <strain>cv. Columbia</strain>
    </source>
</reference>
<reference key="2">
    <citation type="journal article" date="2017" name="Plant J.">
        <title>Araport11: a complete reannotation of the Arabidopsis thaliana reference genome.</title>
        <authorList>
            <person name="Cheng C.Y."/>
            <person name="Krishnakumar V."/>
            <person name="Chan A.P."/>
            <person name="Thibaud-Nissen F."/>
            <person name="Schobel S."/>
            <person name="Town C.D."/>
        </authorList>
    </citation>
    <scope>GENOME REANNOTATION</scope>
    <source>
        <strain>cv. Columbia</strain>
    </source>
</reference>
<reference key="3">
    <citation type="journal article" date="2003" name="Science">
        <title>Empirical analysis of transcriptional activity in the Arabidopsis genome.</title>
        <authorList>
            <person name="Yamada K."/>
            <person name="Lim J."/>
            <person name="Dale J.M."/>
            <person name="Chen H."/>
            <person name="Shinn P."/>
            <person name="Palm C.J."/>
            <person name="Southwick A.M."/>
            <person name="Wu H.C."/>
            <person name="Kim C.J."/>
            <person name="Nguyen M."/>
            <person name="Pham P.K."/>
            <person name="Cheuk R.F."/>
            <person name="Karlin-Newmann G."/>
            <person name="Liu S.X."/>
            <person name="Lam B."/>
            <person name="Sakano H."/>
            <person name="Wu T."/>
            <person name="Yu G."/>
            <person name="Miranda M."/>
            <person name="Quach H.L."/>
            <person name="Tripp M."/>
            <person name="Chang C.H."/>
            <person name="Lee J.M."/>
            <person name="Toriumi M.J."/>
            <person name="Chan M.M."/>
            <person name="Tang C.C."/>
            <person name="Onodera C.S."/>
            <person name="Deng J.M."/>
            <person name="Akiyama K."/>
            <person name="Ansari Y."/>
            <person name="Arakawa T."/>
            <person name="Banh J."/>
            <person name="Banno F."/>
            <person name="Bowser L."/>
            <person name="Brooks S.Y."/>
            <person name="Carninci P."/>
            <person name="Chao Q."/>
            <person name="Choy N."/>
            <person name="Enju A."/>
            <person name="Goldsmith A.D."/>
            <person name="Gurjal M."/>
            <person name="Hansen N.F."/>
            <person name="Hayashizaki Y."/>
            <person name="Johnson-Hopson C."/>
            <person name="Hsuan V.W."/>
            <person name="Iida K."/>
            <person name="Karnes M."/>
            <person name="Khan S."/>
            <person name="Koesema E."/>
            <person name="Ishida J."/>
            <person name="Jiang P.X."/>
            <person name="Jones T."/>
            <person name="Kawai J."/>
            <person name="Kamiya A."/>
            <person name="Meyers C."/>
            <person name="Nakajima M."/>
            <person name="Narusaka M."/>
            <person name="Seki M."/>
            <person name="Sakurai T."/>
            <person name="Satou M."/>
            <person name="Tamse R."/>
            <person name="Vaysberg M."/>
            <person name="Wallender E.K."/>
            <person name="Wong C."/>
            <person name="Yamamura Y."/>
            <person name="Yuan S."/>
            <person name="Shinozaki K."/>
            <person name="Davis R.W."/>
            <person name="Theologis A."/>
            <person name="Ecker J.R."/>
        </authorList>
    </citation>
    <scope>NUCLEOTIDE SEQUENCE [LARGE SCALE MRNA]</scope>
    <source>
        <strain>cv. Columbia</strain>
    </source>
</reference>
<reference key="4">
    <citation type="submission" date="2002-03" db="EMBL/GenBank/DDBJ databases">
        <title>Full-length cDNA from Arabidopsis thaliana.</title>
        <authorList>
            <person name="Brover V.V."/>
            <person name="Troukhan M.E."/>
            <person name="Alexandrov N.A."/>
            <person name="Lu Y.-P."/>
            <person name="Flavell R.B."/>
            <person name="Feldmann K.A."/>
        </authorList>
    </citation>
    <scope>NUCLEOTIDE SEQUENCE [LARGE SCALE MRNA]</scope>
</reference>
<reference key="5">
    <citation type="journal article" date="2009" name="Plant Physiol.">
        <title>Large-scale Arabidopsis phosphoproteome profiling reveals novel chloroplast kinase substrates and phosphorylation networks.</title>
        <authorList>
            <person name="Reiland S."/>
            <person name="Messerli G."/>
            <person name="Baerenfaller K."/>
            <person name="Gerrits B."/>
            <person name="Endler A."/>
            <person name="Grossmann J."/>
            <person name="Gruissem W."/>
            <person name="Baginsky S."/>
        </authorList>
    </citation>
    <scope>PHOSPHORYLATION [LARGE SCALE ANALYSIS] AT SER-172</scope>
    <scope>IDENTIFICATION BY MASS SPECTROMETRY [LARGE SCALE ANALYSIS]</scope>
</reference>
<reference key="6">
    <citation type="journal article" date="2023" name="Plant Cell">
        <title>An updated nomenclature for plant ribosomal protein genes.</title>
        <authorList>
            <person name="Scarpin M.R."/>
            <person name="Busche M."/>
            <person name="Martinez R.E."/>
            <person name="Harper L.C."/>
            <person name="Reiser L."/>
            <person name="Szakonyi D."/>
            <person name="Merchante C."/>
            <person name="Lan T."/>
            <person name="Xiong W."/>
            <person name="Mo B."/>
            <person name="Tang G."/>
            <person name="Chen X."/>
            <person name="Bailey-Serres J."/>
            <person name="Browning K.S."/>
            <person name="Brunkard J.O."/>
        </authorList>
    </citation>
    <scope>NOMENCLATURE</scope>
</reference>
<evidence type="ECO:0000250" key="1"/>
<evidence type="ECO:0000256" key="2">
    <source>
        <dbReference type="SAM" id="MobiDB-lite"/>
    </source>
</evidence>
<evidence type="ECO:0000303" key="3">
    <source>
    </source>
</evidence>
<evidence type="ECO:0000305" key="4"/>
<evidence type="ECO:0007744" key="5">
    <source>
    </source>
</evidence>
<name>RK29_ARATH</name>
<feature type="transit peptide" description="Chloroplast" evidence="1">
    <location>
        <begin position="1"/>
        <end position="60"/>
    </location>
</feature>
<feature type="chain" id="PRO_0000030510" description="Large ribosomal subunit protein uL29c">
    <location>
        <begin position="61"/>
        <end position="173"/>
    </location>
</feature>
<feature type="region of interest" description="Disordered" evidence="2">
    <location>
        <begin position="143"/>
        <end position="173"/>
    </location>
</feature>
<feature type="modified residue" description="Phosphoserine" evidence="5">
    <location>
        <position position="172"/>
    </location>
</feature>
<organism>
    <name type="scientific">Arabidopsis thaliana</name>
    <name type="common">Mouse-ear cress</name>
    <dbReference type="NCBI Taxonomy" id="3702"/>
    <lineage>
        <taxon>Eukaryota</taxon>
        <taxon>Viridiplantae</taxon>
        <taxon>Streptophyta</taxon>
        <taxon>Embryophyta</taxon>
        <taxon>Tracheophyta</taxon>
        <taxon>Spermatophyta</taxon>
        <taxon>Magnoliopsida</taxon>
        <taxon>eudicotyledons</taxon>
        <taxon>Gunneridae</taxon>
        <taxon>Pentapetalae</taxon>
        <taxon>rosids</taxon>
        <taxon>malvids</taxon>
        <taxon>Brassicales</taxon>
        <taxon>Brassicaceae</taxon>
        <taxon>Camelineae</taxon>
        <taxon>Arabidopsis</taxon>
    </lineage>
</organism>
<keyword id="KW-0150">Chloroplast</keyword>
<keyword id="KW-0597">Phosphoprotein</keyword>
<keyword id="KW-0934">Plastid</keyword>
<keyword id="KW-1185">Reference proteome</keyword>
<keyword id="KW-0687">Ribonucleoprotein</keyword>
<keyword id="KW-0689">Ribosomal protein</keyword>
<keyword id="KW-0809">Transit peptide</keyword>
<gene>
    <name type="primary">RPL29</name>
    <name type="ordered locus">At5g65220</name>
    <name type="ORF">MQN23.16</name>
</gene>
<accession>Q9FJP3</accession>
<protein>
    <recommendedName>
        <fullName evidence="3">Large ribosomal subunit protein uL29c</fullName>
    </recommendedName>
    <alternativeName>
        <fullName>50S ribosomal protein L29, chloroplastic</fullName>
    </alternativeName>
    <alternativeName>
        <fullName>CL29</fullName>
    </alternativeName>
</protein>
<proteinExistence type="evidence at protein level"/>
<sequence length="173" mass="19377">MLSLSIATPGTAAIFRRGTASATSTSSSFHGVRIQHQVSARVPAAATISSSSPKPSVVMMSKREAELKEIRSKTTEQLQEEVVDLKGELFMLRLQKSARNEFKSSDFRRMKKQVARMLTVKREREIKEGIKKRLSRKLDRQWKKSIVPRPPPSLKKLQEEEAAEEAAEAAKSA</sequence>
<dbReference type="EMBL" id="AB013395">
    <property type="protein sequence ID" value="BAB11658.1"/>
    <property type="molecule type" value="Genomic_DNA"/>
</dbReference>
<dbReference type="EMBL" id="CP002688">
    <property type="protein sequence ID" value="AED98025.1"/>
    <property type="molecule type" value="Genomic_DNA"/>
</dbReference>
<dbReference type="EMBL" id="AY045966">
    <property type="protein sequence ID" value="AAK76640.1"/>
    <property type="molecule type" value="mRNA"/>
</dbReference>
<dbReference type="EMBL" id="AY079351">
    <property type="protein sequence ID" value="AAL85082.1"/>
    <property type="molecule type" value="mRNA"/>
</dbReference>
<dbReference type="EMBL" id="AY085663">
    <property type="protein sequence ID" value="AAM62883.1"/>
    <property type="molecule type" value="mRNA"/>
</dbReference>
<dbReference type="RefSeq" id="NP_201325.1">
    <property type="nucleotide sequence ID" value="NM_125920.4"/>
</dbReference>
<dbReference type="SMR" id="Q9FJP3"/>
<dbReference type="BioGRID" id="21889">
    <property type="interactions" value="5"/>
</dbReference>
<dbReference type="FunCoup" id="Q9FJP3">
    <property type="interactions" value="1432"/>
</dbReference>
<dbReference type="IntAct" id="Q9FJP3">
    <property type="interactions" value="2"/>
</dbReference>
<dbReference type="STRING" id="3702.Q9FJP3"/>
<dbReference type="iPTMnet" id="Q9FJP3"/>
<dbReference type="MetOSite" id="Q9FJP3"/>
<dbReference type="PaxDb" id="3702-AT5G65220.1"/>
<dbReference type="ProteomicsDB" id="234809"/>
<dbReference type="EnsemblPlants" id="AT5G65220.1">
    <property type="protein sequence ID" value="AT5G65220.1"/>
    <property type="gene ID" value="AT5G65220"/>
</dbReference>
<dbReference type="GeneID" id="836647"/>
<dbReference type="Gramene" id="AT5G65220.1">
    <property type="protein sequence ID" value="AT5G65220.1"/>
    <property type="gene ID" value="AT5G65220"/>
</dbReference>
<dbReference type="KEGG" id="ath:AT5G65220"/>
<dbReference type="Araport" id="AT5G65220"/>
<dbReference type="TAIR" id="AT5G65220">
    <property type="gene designation" value="PRPL29"/>
</dbReference>
<dbReference type="eggNOG" id="KOG3436">
    <property type="taxonomic scope" value="Eukaryota"/>
</dbReference>
<dbReference type="HOGENOM" id="CLU_110022_1_1_1"/>
<dbReference type="InParanoid" id="Q9FJP3"/>
<dbReference type="OMA" id="SSFHGIK"/>
<dbReference type="OrthoDB" id="528635at2759"/>
<dbReference type="PhylomeDB" id="Q9FJP3"/>
<dbReference type="PRO" id="PR:Q9FJP3"/>
<dbReference type="Proteomes" id="UP000006548">
    <property type="component" value="Chromosome 5"/>
</dbReference>
<dbReference type="ExpressionAtlas" id="Q9FJP3">
    <property type="expression patterns" value="baseline and differential"/>
</dbReference>
<dbReference type="GO" id="GO:0009507">
    <property type="term" value="C:chloroplast"/>
    <property type="evidence" value="ECO:0007005"/>
    <property type="project" value="TAIR"/>
</dbReference>
<dbReference type="GO" id="GO:0009941">
    <property type="term" value="C:chloroplast envelope"/>
    <property type="evidence" value="ECO:0007005"/>
    <property type="project" value="TAIR"/>
</dbReference>
<dbReference type="GO" id="GO:0042644">
    <property type="term" value="C:chloroplast nucleoid"/>
    <property type="evidence" value="ECO:0007005"/>
    <property type="project" value="TAIR"/>
</dbReference>
<dbReference type="GO" id="GO:0009570">
    <property type="term" value="C:chloroplast stroma"/>
    <property type="evidence" value="ECO:0007005"/>
    <property type="project" value="TAIR"/>
</dbReference>
<dbReference type="GO" id="GO:0009536">
    <property type="term" value="C:plastid"/>
    <property type="evidence" value="ECO:0007005"/>
    <property type="project" value="TAIR"/>
</dbReference>
<dbReference type="GO" id="GO:1990904">
    <property type="term" value="C:ribonucleoprotein complex"/>
    <property type="evidence" value="ECO:0007669"/>
    <property type="project" value="UniProtKB-KW"/>
</dbReference>
<dbReference type="GO" id="GO:0005840">
    <property type="term" value="C:ribosome"/>
    <property type="evidence" value="ECO:0007669"/>
    <property type="project" value="UniProtKB-KW"/>
</dbReference>
<dbReference type="GO" id="GO:0003735">
    <property type="term" value="F:structural constituent of ribosome"/>
    <property type="evidence" value="ECO:0007669"/>
    <property type="project" value="InterPro"/>
</dbReference>
<dbReference type="GO" id="GO:0006412">
    <property type="term" value="P:translation"/>
    <property type="evidence" value="ECO:0007669"/>
    <property type="project" value="InterPro"/>
</dbReference>
<dbReference type="CDD" id="cd00427">
    <property type="entry name" value="Ribosomal_L29_HIP"/>
    <property type="match status" value="1"/>
</dbReference>
<dbReference type="FunFam" id="1.10.287.310:FF:000004">
    <property type="entry name" value="50S ribosomal protein L29, chloroplastic"/>
    <property type="match status" value="1"/>
</dbReference>
<dbReference type="Gene3D" id="1.10.287.310">
    <property type="match status" value="1"/>
</dbReference>
<dbReference type="HAMAP" id="MF_00374">
    <property type="entry name" value="Ribosomal_uL29"/>
    <property type="match status" value="1"/>
</dbReference>
<dbReference type="InterPro" id="IPR050063">
    <property type="entry name" value="Ribosomal_protein_uL29"/>
</dbReference>
<dbReference type="InterPro" id="IPR001854">
    <property type="entry name" value="Ribosomal_uL29"/>
</dbReference>
<dbReference type="InterPro" id="IPR036049">
    <property type="entry name" value="Ribosomal_uL29_sf"/>
</dbReference>
<dbReference type="NCBIfam" id="TIGR00012">
    <property type="entry name" value="L29"/>
    <property type="match status" value="1"/>
</dbReference>
<dbReference type="PANTHER" id="PTHR10916">
    <property type="entry name" value="60S RIBOSOMAL PROTEIN L35/50S RIBOSOMAL PROTEIN L29"/>
    <property type="match status" value="1"/>
</dbReference>
<dbReference type="PANTHER" id="PTHR10916:SF0">
    <property type="entry name" value="LARGE RIBOSOMAL SUBUNIT PROTEIN UL29C"/>
    <property type="match status" value="1"/>
</dbReference>
<dbReference type="Pfam" id="PF00831">
    <property type="entry name" value="Ribosomal_L29"/>
    <property type="match status" value="1"/>
</dbReference>
<dbReference type="SUPFAM" id="SSF46561">
    <property type="entry name" value="Ribosomal protein L29 (L29p)"/>
    <property type="match status" value="1"/>
</dbReference>
<comment type="subunit">
    <text evidence="1">Part of the 50S ribosomal subunit.</text>
</comment>
<comment type="subcellular location">
    <subcellularLocation>
        <location evidence="1">Plastid</location>
        <location evidence="1">Chloroplast</location>
    </subcellularLocation>
</comment>
<comment type="similarity">
    <text evidence="4">Belongs to the universal ribosomal protein uL29 family.</text>
</comment>